<name>RL30_COREF</name>
<protein>
    <recommendedName>
        <fullName evidence="1">Large ribosomal subunit protein uL30</fullName>
    </recommendedName>
    <alternativeName>
        <fullName evidence="2">50S ribosomal protein L30</fullName>
    </alternativeName>
</protein>
<reference key="1">
    <citation type="journal article" date="2003" name="Genome Res.">
        <title>Comparative complete genome sequence analysis of the amino acid replacements responsible for the thermostability of Corynebacterium efficiens.</title>
        <authorList>
            <person name="Nishio Y."/>
            <person name="Nakamura Y."/>
            <person name="Kawarabayasi Y."/>
            <person name="Usuda Y."/>
            <person name="Kimura E."/>
            <person name="Sugimoto S."/>
            <person name="Matsui K."/>
            <person name="Yamagishi A."/>
            <person name="Kikuchi H."/>
            <person name="Ikeo K."/>
            <person name="Gojobori T."/>
        </authorList>
    </citation>
    <scope>NUCLEOTIDE SEQUENCE [LARGE SCALE GENOMIC DNA]</scope>
    <source>
        <strain>DSM 44549 / YS-314 / AJ 12310 / JCM 11189 / NBRC 100395</strain>
    </source>
</reference>
<dbReference type="EMBL" id="BA000035">
    <property type="protein sequence ID" value="BAC17363.1"/>
    <property type="molecule type" value="Genomic_DNA"/>
</dbReference>
<dbReference type="RefSeq" id="WP_011075040.1">
    <property type="nucleotide sequence ID" value="NC_004369.1"/>
</dbReference>
<dbReference type="SMR" id="Q8FS51"/>
<dbReference type="STRING" id="196164.gene:10740955"/>
<dbReference type="KEGG" id="cef:CE0553"/>
<dbReference type="eggNOG" id="COG1841">
    <property type="taxonomic scope" value="Bacteria"/>
</dbReference>
<dbReference type="HOGENOM" id="CLU_131047_2_0_11"/>
<dbReference type="OrthoDB" id="9812790at2"/>
<dbReference type="Proteomes" id="UP000001409">
    <property type="component" value="Chromosome"/>
</dbReference>
<dbReference type="GO" id="GO:0022625">
    <property type="term" value="C:cytosolic large ribosomal subunit"/>
    <property type="evidence" value="ECO:0007669"/>
    <property type="project" value="TreeGrafter"/>
</dbReference>
<dbReference type="GO" id="GO:0003735">
    <property type="term" value="F:structural constituent of ribosome"/>
    <property type="evidence" value="ECO:0007669"/>
    <property type="project" value="InterPro"/>
</dbReference>
<dbReference type="GO" id="GO:0006412">
    <property type="term" value="P:translation"/>
    <property type="evidence" value="ECO:0007669"/>
    <property type="project" value="UniProtKB-UniRule"/>
</dbReference>
<dbReference type="CDD" id="cd01658">
    <property type="entry name" value="Ribosomal_L30"/>
    <property type="match status" value="1"/>
</dbReference>
<dbReference type="FunFam" id="3.30.1390.20:FF:000001">
    <property type="entry name" value="50S ribosomal protein L30"/>
    <property type="match status" value="1"/>
</dbReference>
<dbReference type="Gene3D" id="3.30.1390.20">
    <property type="entry name" value="Ribosomal protein L30, ferredoxin-like fold domain"/>
    <property type="match status" value="1"/>
</dbReference>
<dbReference type="HAMAP" id="MF_01371_B">
    <property type="entry name" value="Ribosomal_uL30_B"/>
    <property type="match status" value="1"/>
</dbReference>
<dbReference type="InterPro" id="IPR036919">
    <property type="entry name" value="Ribo_uL30_ferredoxin-like_sf"/>
</dbReference>
<dbReference type="InterPro" id="IPR005996">
    <property type="entry name" value="Ribosomal_uL30_bac-type"/>
</dbReference>
<dbReference type="InterPro" id="IPR016082">
    <property type="entry name" value="Ribosomal_uL30_ferredoxin-like"/>
</dbReference>
<dbReference type="NCBIfam" id="TIGR01308">
    <property type="entry name" value="rpmD_bact"/>
    <property type="match status" value="1"/>
</dbReference>
<dbReference type="PANTHER" id="PTHR15892:SF2">
    <property type="entry name" value="LARGE RIBOSOMAL SUBUNIT PROTEIN UL30M"/>
    <property type="match status" value="1"/>
</dbReference>
<dbReference type="PANTHER" id="PTHR15892">
    <property type="entry name" value="MITOCHONDRIAL RIBOSOMAL PROTEIN L30"/>
    <property type="match status" value="1"/>
</dbReference>
<dbReference type="Pfam" id="PF00327">
    <property type="entry name" value="Ribosomal_L30"/>
    <property type="match status" value="1"/>
</dbReference>
<dbReference type="PIRSF" id="PIRSF002211">
    <property type="entry name" value="Ribosomal_L30_bac-type"/>
    <property type="match status" value="1"/>
</dbReference>
<dbReference type="SUPFAM" id="SSF55129">
    <property type="entry name" value="Ribosomal protein L30p/L7e"/>
    <property type="match status" value="1"/>
</dbReference>
<feature type="chain" id="PRO_0000273774" description="Large ribosomal subunit protein uL30">
    <location>
        <begin position="1"/>
        <end position="61"/>
    </location>
</feature>
<gene>
    <name evidence="1" type="primary">rpmD</name>
    <name type="ordered locus">CE0553</name>
</gene>
<proteinExistence type="inferred from homology"/>
<sequence length="61" mass="6822">MALKITQVKGTIGTKPKHRDNLRSLGLKRIRHSVVRPDTPEVRGMVQAVRHLIVVEEVAGE</sequence>
<keyword id="KW-1185">Reference proteome</keyword>
<keyword id="KW-0687">Ribonucleoprotein</keyword>
<keyword id="KW-0689">Ribosomal protein</keyword>
<accession>Q8FS51</accession>
<comment type="subunit">
    <text evidence="1">Part of the 50S ribosomal subunit.</text>
</comment>
<comment type="similarity">
    <text evidence="1">Belongs to the universal ribosomal protein uL30 family.</text>
</comment>
<organism>
    <name type="scientific">Corynebacterium efficiens (strain DSM 44549 / YS-314 / AJ 12310 / JCM 11189 / NBRC 100395)</name>
    <dbReference type="NCBI Taxonomy" id="196164"/>
    <lineage>
        <taxon>Bacteria</taxon>
        <taxon>Bacillati</taxon>
        <taxon>Actinomycetota</taxon>
        <taxon>Actinomycetes</taxon>
        <taxon>Mycobacteriales</taxon>
        <taxon>Corynebacteriaceae</taxon>
        <taxon>Corynebacterium</taxon>
    </lineage>
</organism>
<evidence type="ECO:0000255" key="1">
    <source>
        <dbReference type="HAMAP-Rule" id="MF_01371"/>
    </source>
</evidence>
<evidence type="ECO:0000305" key="2"/>